<sequence>MKRRALVSVSNKEGIVPFAKALVEHEVEIVSTGGTKRALQEAGIPVTGISDVTGFPEILDGRVKTLHPNIHGGLLAMRERDEHLAQLNEHHIRPIDFVVVNLYPFQQTIAKPEATFADAIENIDIGGPSMLRAAAKNHQHVTVVVDPVDYETVLKELADQGNVATETKRRLAAKVFRHTAAYDAMIAEYLTDAVGEESPESLTVTFEKKQDLRYGENPHQKATFYQKPLGAKASIAHAKQLHGKELSYNNINDADAALSIVKEFKEPAAVAVKHMNPCGVGTGETIKEAFDKAYEADPVSIFGGIIALNREVDVETAKTLKEIFLEIIIAPSFSEEALDVLTSKKNLRLLTLPLNEENQAEKRITSIHGGALVQEEDTYGFEEAEIKIPTKREPTEAEWEALKLAWRVVKHVKSNAIVLADGQMTVGVGAGQMNRVGAAKIAIEQAGEKAAGSVMGSDAFFPMGDTVELAAKAGITAIIQPGGSIRDEESIENADKHGIAMVFTGVRHFKH</sequence>
<comment type="catalytic activity">
    <reaction evidence="1">
        <text>(6R)-10-formyltetrahydrofolate + 5-amino-1-(5-phospho-beta-D-ribosyl)imidazole-4-carboxamide = 5-formamido-1-(5-phospho-D-ribosyl)imidazole-4-carboxamide + (6S)-5,6,7,8-tetrahydrofolate</text>
        <dbReference type="Rhea" id="RHEA:22192"/>
        <dbReference type="ChEBI" id="CHEBI:57453"/>
        <dbReference type="ChEBI" id="CHEBI:58467"/>
        <dbReference type="ChEBI" id="CHEBI:58475"/>
        <dbReference type="ChEBI" id="CHEBI:195366"/>
        <dbReference type="EC" id="2.1.2.3"/>
    </reaction>
</comment>
<comment type="catalytic activity">
    <reaction evidence="1">
        <text>IMP + H2O = 5-formamido-1-(5-phospho-D-ribosyl)imidazole-4-carboxamide</text>
        <dbReference type="Rhea" id="RHEA:18445"/>
        <dbReference type="ChEBI" id="CHEBI:15377"/>
        <dbReference type="ChEBI" id="CHEBI:58053"/>
        <dbReference type="ChEBI" id="CHEBI:58467"/>
        <dbReference type="EC" id="3.5.4.10"/>
    </reaction>
</comment>
<comment type="pathway">
    <text evidence="1">Purine metabolism; IMP biosynthesis via de novo pathway; 5-formamido-1-(5-phospho-D-ribosyl)imidazole-4-carboxamide from 5-amino-1-(5-phospho-D-ribosyl)imidazole-4-carboxamide (10-formyl THF route): step 1/1.</text>
</comment>
<comment type="pathway">
    <text evidence="1">Purine metabolism; IMP biosynthesis via de novo pathway; IMP from 5-formamido-1-(5-phospho-D-ribosyl)imidazole-4-carboxamide: step 1/1.</text>
</comment>
<comment type="domain">
    <text evidence="1">The IMP cyclohydrolase activity resides in the N-terminal region.</text>
</comment>
<comment type="similarity">
    <text evidence="1">Belongs to the PurH family.</text>
</comment>
<feature type="chain" id="PRO_0000192069" description="Bifunctional purine biosynthesis protein PurH">
    <location>
        <begin position="1"/>
        <end position="511"/>
    </location>
</feature>
<feature type="domain" description="MGS-like" evidence="2">
    <location>
        <begin position="1"/>
        <end position="145"/>
    </location>
</feature>
<dbReference type="EC" id="2.1.2.3" evidence="1"/>
<dbReference type="EC" id="3.5.4.10" evidence="1"/>
<dbReference type="EMBL" id="BA000004">
    <property type="protein sequence ID" value="BAB04352.1"/>
    <property type="molecule type" value="Genomic_DNA"/>
</dbReference>
<dbReference type="PIR" id="A83729">
    <property type="entry name" value="A83729"/>
</dbReference>
<dbReference type="RefSeq" id="WP_010896809.1">
    <property type="nucleotide sequence ID" value="NC_002570.2"/>
</dbReference>
<dbReference type="SMR" id="Q9KF53"/>
<dbReference type="STRING" id="272558.gene:10726507"/>
<dbReference type="KEGG" id="bha:BH0633"/>
<dbReference type="eggNOG" id="COG0138">
    <property type="taxonomic scope" value="Bacteria"/>
</dbReference>
<dbReference type="HOGENOM" id="CLU_016316_5_2_9"/>
<dbReference type="OrthoDB" id="9802065at2"/>
<dbReference type="UniPathway" id="UPA00074">
    <property type="reaction ID" value="UER00133"/>
</dbReference>
<dbReference type="UniPathway" id="UPA00074">
    <property type="reaction ID" value="UER00135"/>
</dbReference>
<dbReference type="Proteomes" id="UP000001258">
    <property type="component" value="Chromosome"/>
</dbReference>
<dbReference type="GO" id="GO:0005829">
    <property type="term" value="C:cytosol"/>
    <property type="evidence" value="ECO:0007669"/>
    <property type="project" value="TreeGrafter"/>
</dbReference>
<dbReference type="GO" id="GO:0003937">
    <property type="term" value="F:IMP cyclohydrolase activity"/>
    <property type="evidence" value="ECO:0007669"/>
    <property type="project" value="UniProtKB-UniRule"/>
</dbReference>
<dbReference type="GO" id="GO:0004643">
    <property type="term" value="F:phosphoribosylaminoimidazolecarboxamide formyltransferase activity"/>
    <property type="evidence" value="ECO:0007669"/>
    <property type="project" value="UniProtKB-UniRule"/>
</dbReference>
<dbReference type="GO" id="GO:0006189">
    <property type="term" value="P:'de novo' IMP biosynthetic process"/>
    <property type="evidence" value="ECO:0007669"/>
    <property type="project" value="UniProtKB-UniRule"/>
</dbReference>
<dbReference type="CDD" id="cd01421">
    <property type="entry name" value="IMPCH"/>
    <property type="match status" value="1"/>
</dbReference>
<dbReference type="FunFam" id="3.40.140.20:FF:000001">
    <property type="entry name" value="Bifunctional purine biosynthesis protein PurH"/>
    <property type="match status" value="1"/>
</dbReference>
<dbReference type="FunFam" id="3.40.140.20:FF:000002">
    <property type="entry name" value="Bifunctional purine biosynthesis protein PurH"/>
    <property type="match status" value="1"/>
</dbReference>
<dbReference type="FunFam" id="3.40.50.1380:FF:000001">
    <property type="entry name" value="Bifunctional purine biosynthesis protein PurH"/>
    <property type="match status" value="1"/>
</dbReference>
<dbReference type="Gene3D" id="3.40.140.20">
    <property type="match status" value="2"/>
</dbReference>
<dbReference type="Gene3D" id="3.40.50.1380">
    <property type="entry name" value="Methylglyoxal synthase-like domain"/>
    <property type="match status" value="1"/>
</dbReference>
<dbReference type="HAMAP" id="MF_00139">
    <property type="entry name" value="PurH"/>
    <property type="match status" value="1"/>
</dbReference>
<dbReference type="InterPro" id="IPR024051">
    <property type="entry name" value="AICAR_Tfase_dup_dom_sf"/>
</dbReference>
<dbReference type="InterPro" id="IPR016193">
    <property type="entry name" value="Cytidine_deaminase-like"/>
</dbReference>
<dbReference type="InterPro" id="IPR011607">
    <property type="entry name" value="MGS-like_dom"/>
</dbReference>
<dbReference type="InterPro" id="IPR036914">
    <property type="entry name" value="MGS-like_dom_sf"/>
</dbReference>
<dbReference type="InterPro" id="IPR002695">
    <property type="entry name" value="PurH-like"/>
</dbReference>
<dbReference type="NCBIfam" id="NF002049">
    <property type="entry name" value="PRK00881.1"/>
    <property type="match status" value="1"/>
</dbReference>
<dbReference type="NCBIfam" id="TIGR00355">
    <property type="entry name" value="purH"/>
    <property type="match status" value="1"/>
</dbReference>
<dbReference type="PANTHER" id="PTHR11692:SF0">
    <property type="entry name" value="BIFUNCTIONAL PURINE BIOSYNTHESIS PROTEIN ATIC"/>
    <property type="match status" value="1"/>
</dbReference>
<dbReference type="PANTHER" id="PTHR11692">
    <property type="entry name" value="BIFUNCTIONAL PURINE BIOSYNTHESIS PROTEIN PURH"/>
    <property type="match status" value="1"/>
</dbReference>
<dbReference type="Pfam" id="PF01808">
    <property type="entry name" value="AICARFT_IMPCHas"/>
    <property type="match status" value="1"/>
</dbReference>
<dbReference type="Pfam" id="PF02142">
    <property type="entry name" value="MGS"/>
    <property type="match status" value="1"/>
</dbReference>
<dbReference type="PIRSF" id="PIRSF000414">
    <property type="entry name" value="AICARFT_IMPCHas"/>
    <property type="match status" value="1"/>
</dbReference>
<dbReference type="SMART" id="SM00798">
    <property type="entry name" value="AICARFT_IMPCHas"/>
    <property type="match status" value="1"/>
</dbReference>
<dbReference type="SMART" id="SM00851">
    <property type="entry name" value="MGS"/>
    <property type="match status" value="1"/>
</dbReference>
<dbReference type="SUPFAM" id="SSF53927">
    <property type="entry name" value="Cytidine deaminase-like"/>
    <property type="match status" value="1"/>
</dbReference>
<dbReference type="SUPFAM" id="SSF52335">
    <property type="entry name" value="Methylglyoxal synthase-like"/>
    <property type="match status" value="1"/>
</dbReference>
<dbReference type="PROSITE" id="PS51855">
    <property type="entry name" value="MGS"/>
    <property type="match status" value="1"/>
</dbReference>
<keyword id="KW-0378">Hydrolase</keyword>
<keyword id="KW-0511">Multifunctional enzyme</keyword>
<keyword id="KW-0658">Purine biosynthesis</keyword>
<keyword id="KW-1185">Reference proteome</keyword>
<keyword id="KW-0808">Transferase</keyword>
<proteinExistence type="inferred from homology"/>
<organism>
    <name type="scientific">Halalkalibacterium halodurans (strain ATCC BAA-125 / DSM 18197 / FERM 7344 / JCM 9153 / C-125)</name>
    <name type="common">Bacillus halodurans</name>
    <dbReference type="NCBI Taxonomy" id="272558"/>
    <lineage>
        <taxon>Bacteria</taxon>
        <taxon>Bacillati</taxon>
        <taxon>Bacillota</taxon>
        <taxon>Bacilli</taxon>
        <taxon>Bacillales</taxon>
        <taxon>Bacillaceae</taxon>
        <taxon>Halalkalibacterium (ex Joshi et al. 2022)</taxon>
    </lineage>
</organism>
<reference key="1">
    <citation type="journal article" date="2000" name="Nucleic Acids Res.">
        <title>Complete genome sequence of the alkaliphilic bacterium Bacillus halodurans and genomic sequence comparison with Bacillus subtilis.</title>
        <authorList>
            <person name="Takami H."/>
            <person name="Nakasone K."/>
            <person name="Takaki Y."/>
            <person name="Maeno G."/>
            <person name="Sasaki R."/>
            <person name="Masui N."/>
            <person name="Fuji F."/>
            <person name="Hirama C."/>
            <person name="Nakamura Y."/>
            <person name="Ogasawara N."/>
            <person name="Kuhara S."/>
            <person name="Horikoshi K."/>
        </authorList>
    </citation>
    <scope>NUCLEOTIDE SEQUENCE [LARGE SCALE GENOMIC DNA]</scope>
    <source>
        <strain>ATCC BAA-125 / DSM 18197 / FERM 7344 / JCM 9153 / C-125</strain>
    </source>
</reference>
<gene>
    <name evidence="1" type="primary">purH</name>
    <name type="ordered locus">BH0633</name>
</gene>
<protein>
    <recommendedName>
        <fullName evidence="1">Bifunctional purine biosynthesis protein PurH</fullName>
    </recommendedName>
    <domain>
        <recommendedName>
            <fullName evidence="1">Phosphoribosylaminoimidazolecarboxamide formyltransferase</fullName>
            <ecNumber evidence="1">2.1.2.3</ecNumber>
        </recommendedName>
        <alternativeName>
            <fullName evidence="1">AICAR transformylase</fullName>
        </alternativeName>
    </domain>
    <domain>
        <recommendedName>
            <fullName evidence="1">IMP cyclohydrolase</fullName>
            <ecNumber evidence="1">3.5.4.10</ecNumber>
        </recommendedName>
        <alternativeName>
            <fullName evidence="1">ATIC</fullName>
        </alternativeName>
        <alternativeName>
            <fullName evidence="1">IMP synthase</fullName>
        </alternativeName>
        <alternativeName>
            <fullName evidence="1">Inosinicase</fullName>
        </alternativeName>
    </domain>
</protein>
<name>PUR9_HALH5</name>
<evidence type="ECO:0000255" key="1">
    <source>
        <dbReference type="HAMAP-Rule" id="MF_00139"/>
    </source>
</evidence>
<evidence type="ECO:0000255" key="2">
    <source>
        <dbReference type="PROSITE-ProRule" id="PRU01202"/>
    </source>
</evidence>
<accession>Q9KF53</accession>